<dbReference type="EMBL" id="AAHF01000011">
    <property type="protein sequence ID" value="EBA27256.1"/>
    <property type="molecule type" value="Genomic_DNA"/>
</dbReference>
<dbReference type="RefSeq" id="XP_001481489.1">
    <property type="nucleotide sequence ID" value="XM_001481439.1"/>
</dbReference>
<dbReference type="STRING" id="330879.A4DA06"/>
<dbReference type="GlyCosmos" id="A4DA06">
    <property type="glycosylation" value="2 sites, No reported glycans"/>
</dbReference>
<dbReference type="EnsemblFungi" id="EBA27256">
    <property type="protein sequence ID" value="EBA27256"/>
    <property type="gene ID" value="AFUA_5G02650"/>
</dbReference>
<dbReference type="GeneID" id="5077151"/>
<dbReference type="KEGG" id="afm:AFUA_5G02650"/>
<dbReference type="eggNOG" id="ENOG502S3VC">
    <property type="taxonomic scope" value="Eukaryota"/>
</dbReference>
<dbReference type="HOGENOM" id="CLU_094297_2_1_1"/>
<dbReference type="InParanoid" id="A4DA06"/>
<dbReference type="OMA" id="CYQALPM"/>
<dbReference type="OrthoDB" id="1641132at2759"/>
<dbReference type="Proteomes" id="UP000002530">
    <property type="component" value="Chromosome 5"/>
</dbReference>
<dbReference type="GO" id="GO:0016020">
    <property type="term" value="C:membrane"/>
    <property type="evidence" value="ECO:0007669"/>
    <property type="project" value="UniProtKB-SubCell"/>
</dbReference>
<dbReference type="InterPro" id="IPR025423">
    <property type="entry name" value="TMEM205-like"/>
</dbReference>
<dbReference type="InterPro" id="IPR053009">
    <property type="entry name" value="Xanthocillin_Biosynth-Assoc"/>
</dbReference>
<dbReference type="PANTHER" id="PTHR23241">
    <property type="entry name" value="LATE EMBRYOGENESIS ABUNDANT PLANTS LEA-RELATED"/>
    <property type="match status" value="1"/>
</dbReference>
<dbReference type="PANTHER" id="PTHR23241:SF102">
    <property type="entry name" value="LD23009P"/>
    <property type="match status" value="1"/>
</dbReference>
<dbReference type="Pfam" id="PF13664">
    <property type="entry name" value="DUF4149"/>
    <property type="match status" value="1"/>
</dbReference>
<reference key="1">
    <citation type="journal article" date="2005" name="Nature">
        <title>Genomic sequence of the pathogenic and allergenic filamentous fungus Aspergillus fumigatus.</title>
        <authorList>
            <person name="Nierman W.C."/>
            <person name="Pain A."/>
            <person name="Anderson M.J."/>
            <person name="Wortman J.R."/>
            <person name="Kim H.S."/>
            <person name="Arroyo J."/>
            <person name="Berriman M."/>
            <person name="Abe K."/>
            <person name="Archer D.B."/>
            <person name="Bermejo C."/>
            <person name="Bennett J.W."/>
            <person name="Bowyer P."/>
            <person name="Chen D."/>
            <person name="Collins M."/>
            <person name="Coulsen R."/>
            <person name="Davies R."/>
            <person name="Dyer P.S."/>
            <person name="Farman M.L."/>
            <person name="Fedorova N."/>
            <person name="Fedorova N.D."/>
            <person name="Feldblyum T.V."/>
            <person name="Fischer R."/>
            <person name="Fosker N."/>
            <person name="Fraser A."/>
            <person name="Garcia J.L."/>
            <person name="Garcia M.J."/>
            <person name="Goble A."/>
            <person name="Goldman G.H."/>
            <person name="Gomi K."/>
            <person name="Griffith-Jones S."/>
            <person name="Gwilliam R."/>
            <person name="Haas B.J."/>
            <person name="Haas H."/>
            <person name="Harris D.E."/>
            <person name="Horiuchi H."/>
            <person name="Huang J."/>
            <person name="Humphray S."/>
            <person name="Jimenez J."/>
            <person name="Keller N."/>
            <person name="Khouri H."/>
            <person name="Kitamoto K."/>
            <person name="Kobayashi T."/>
            <person name="Konzack S."/>
            <person name="Kulkarni R."/>
            <person name="Kumagai T."/>
            <person name="Lafton A."/>
            <person name="Latge J.-P."/>
            <person name="Li W."/>
            <person name="Lord A."/>
            <person name="Lu C."/>
            <person name="Majoros W.H."/>
            <person name="May G.S."/>
            <person name="Miller B.L."/>
            <person name="Mohamoud Y."/>
            <person name="Molina M."/>
            <person name="Monod M."/>
            <person name="Mouyna I."/>
            <person name="Mulligan S."/>
            <person name="Murphy L.D."/>
            <person name="O'Neil S."/>
            <person name="Paulsen I."/>
            <person name="Penalva M.A."/>
            <person name="Pertea M."/>
            <person name="Price C."/>
            <person name="Pritchard B.L."/>
            <person name="Quail M.A."/>
            <person name="Rabbinowitsch E."/>
            <person name="Rawlins N."/>
            <person name="Rajandream M.A."/>
            <person name="Reichard U."/>
            <person name="Renauld H."/>
            <person name="Robson G.D."/>
            <person name="Rodriguez de Cordoba S."/>
            <person name="Rodriguez-Pena J.M."/>
            <person name="Ronning C.M."/>
            <person name="Rutter S."/>
            <person name="Salzberg S.L."/>
            <person name="Sanchez M."/>
            <person name="Sanchez-Ferrero J.C."/>
            <person name="Saunders D."/>
            <person name="Seeger K."/>
            <person name="Squares R."/>
            <person name="Squares S."/>
            <person name="Takeuchi M."/>
            <person name="Tekaia F."/>
            <person name="Turner G."/>
            <person name="Vazquez de Aldana C.R."/>
            <person name="Weidman J."/>
            <person name="White O."/>
            <person name="Woodward J.R."/>
            <person name="Yu J.-H."/>
            <person name="Fraser C.M."/>
            <person name="Galagan J.E."/>
            <person name="Asai K."/>
            <person name="Machida M."/>
            <person name="Hall N."/>
            <person name="Barrell B.G."/>
            <person name="Denning D.W."/>
        </authorList>
    </citation>
    <scope>NUCLEOTIDE SEQUENCE [LARGE SCALE GENOMIC DNA]</scope>
    <source>
        <strain>ATCC MYA-4609 / CBS 101355 / FGSC A1100 / Af293</strain>
    </source>
</reference>
<reference key="2">
    <citation type="journal article" date="2018" name="MBio">
        <title>Fungal isocyanide synthases and xanthocillin biosynthesis in Aspergillus fumigatus.</title>
        <authorList>
            <person name="Lim F.Y."/>
            <person name="Won T.H."/>
            <person name="Raffa N."/>
            <person name="Baccile J.A."/>
            <person name="Wisecaver J."/>
            <person name="Rokas A."/>
            <person name="Schroeder F.C."/>
            <person name="Keller N.P."/>
        </authorList>
    </citation>
    <scope>FUNCTION</scope>
    <scope>PATHWAY</scope>
</reference>
<name>XAND_ASPFU</name>
<gene>
    <name evidence="4" type="primary">xanD</name>
    <name type="ORF">AFUA_5G02650</name>
</gene>
<comment type="function">
    <text evidence="3">Part of the gene cluster that mediates the biosynthesis of the isocyanide xanthocillin and its derivatives (PubMed:29844112). The first step of the pathway consists in the conversion of tyrosine into a vinyl-isonitrile intermediate by the isocyanide synthase xanB (PubMed:29844112). Subsequent oxidative dimerization of this intermediate to form xanthocillin may involve the cytochrome P450 monooxygenase xanG, whose expression is coregulated with that of XanB (PubMed:29844112). Xanthocillin can be further modified by the isonitrile hydratase-like protein xanA which introduces N-formyl groups and the methyltransferase xanE which introduces methyl groups, leading to the production of several derivatives including fumiformamide (PubMed:29844112). Finally, fumiformamide can be subject to both oxidative and reductive cyclization to yield melanocins E and F, respectively (PubMed:29844112).</text>
</comment>
<comment type="pathway">
    <text evidence="5">Secondary metabolite biosynthesis.</text>
</comment>
<comment type="subcellular location">
    <subcellularLocation>
        <location evidence="1">Membrane</location>
        <topology evidence="1">Single-pass membrane protein</topology>
    </subcellularLocation>
</comment>
<organism>
    <name type="scientific">Aspergillus fumigatus (strain ATCC MYA-4609 / CBS 101355 / FGSC A1100 / Af293)</name>
    <name type="common">Neosartorya fumigata</name>
    <dbReference type="NCBI Taxonomy" id="330879"/>
    <lineage>
        <taxon>Eukaryota</taxon>
        <taxon>Fungi</taxon>
        <taxon>Dikarya</taxon>
        <taxon>Ascomycota</taxon>
        <taxon>Pezizomycotina</taxon>
        <taxon>Eurotiomycetes</taxon>
        <taxon>Eurotiomycetidae</taxon>
        <taxon>Eurotiales</taxon>
        <taxon>Aspergillaceae</taxon>
        <taxon>Aspergillus</taxon>
        <taxon>Aspergillus subgen. Fumigati</taxon>
    </lineage>
</organism>
<keyword id="KW-0325">Glycoprotein</keyword>
<keyword id="KW-0472">Membrane</keyword>
<keyword id="KW-1185">Reference proteome</keyword>
<keyword id="KW-0812">Transmembrane</keyword>
<keyword id="KW-1133">Transmembrane helix</keyword>
<proteinExistence type="inferred from homology"/>
<sequence length="156" mass="17170">MQAILETVSNLLPYHLLSYGALLGTELFQSFVNTKICYQALPMKEFLALQKRVFPAYFRCQVGLVVLTAVTRPPYSILSFSQHIWDSVPLIAVGVTGALNCAMNEDNSSTTDPAKIQQANKTFSRNHAMSIHLNAIALVATVWYGFTLSSSLLNGL</sequence>
<accession>A4DA06</accession>
<evidence type="ECO:0000255" key="1"/>
<evidence type="ECO:0000255" key="2">
    <source>
        <dbReference type="PROSITE-ProRule" id="PRU00498"/>
    </source>
</evidence>
<evidence type="ECO:0000269" key="3">
    <source>
    </source>
</evidence>
<evidence type="ECO:0000303" key="4">
    <source>
    </source>
</evidence>
<evidence type="ECO:0000305" key="5">
    <source>
    </source>
</evidence>
<feature type="chain" id="PRO_0000445294" description="Xanthocillin biosynthesis cluster protein D">
    <location>
        <begin position="1"/>
        <end position="156"/>
    </location>
</feature>
<feature type="transmembrane region" description="Helical" evidence="1">
    <location>
        <begin position="131"/>
        <end position="153"/>
    </location>
</feature>
<feature type="glycosylation site" description="N-linked (GlcNAc...) asparagine" evidence="2">
    <location>
        <position position="107"/>
    </location>
</feature>
<feature type="glycosylation site" description="N-linked (GlcNAc...) asparagine" evidence="2">
    <location>
        <position position="120"/>
    </location>
</feature>
<protein>
    <recommendedName>
        <fullName evidence="4">Xanthocillin biosynthesis cluster protein D</fullName>
    </recommendedName>
</protein>